<dbReference type="EMBL" id="AE016826">
    <property type="protein sequence ID" value="AAO27226.1"/>
    <property type="molecule type" value="Genomic_DNA"/>
</dbReference>
<dbReference type="RefSeq" id="WP_011091627.1">
    <property type="nucleotide sequence ID" value="NC_004545.1"/>
</dbReference>
<dbReference type="SMR" id="Q89A31"/>
<dbReference type="STRING" id="224915.bbp_524"/>
<dbReference type="KEGG" id="bab:bbp_524"/>
<dbReference type="eggNOG" id="COG1220">
    <property type="taxonomic scope" value="Bacteria"/>
</dbReference>
<dbReference type="HOGENOM" id="CLU_033123_0_0_6"/>
<dbReference type="OrthoDB" id="9804062at2"/>
<dbReference type="Proteomes" id="UP000000601">
    <property type="component" value="Chromosome"/>
</dbReference>
<dbReference type="GO" id="GO:0009376">
    <property type="term" value="C:HslUV protease complex"/>
    <property type="evidence" value="ECO:0007669"/>
    <property type="project" value="UniProtKB-UniRule"/>
</dbReference>
<dbReference type="GO" id="GO:0005524">
    <property type="term" value="F:ATP binding"/>
    <property type="evidence" value="ECO:0007669"/>
    <property type="project" value="UniProtKB-UniRule"/>
</dbReference>
<dbReference type="GO" id="GO:0016887">
    <property type="term" value="F:ATP hydrolysis activity"/>
    <property type="evidence" value="ECO:0007669"/>
    <property type="project" value="InterPro"/>
</dbReference>
<dbReference type="GO" id="GO:0008233">
    <property type="term" value="F:peptidase activity"/>
    <property type="evidence" value="ECO:0007669"/>
    <property type="project" value="InterPro"/>
</dbReference>
<dbReference type="GO" id="GO:0036402">
    <property type="term" value="F:proteasome-activating activity"/>
    <property type="evidence" value="ECO:0007669"/>
    <property type="project" value="UniProtKB-UniRule"/>
</dbReference>
<dbReference type="GO" id="GO:0043335">
    <property type="term" value="P:protein unfolding"/>
    <property type="evidence" value="ECO:0007669"/>
    <property type="project" value="UniProtKB-UniRule"/>
</dbReference>
<dbReference type="GO" id="GO:0051603">
    <property type="term" value="P:proteolysis involved in protein catabolic process"/>
    <property type="evidence" value="ECO:0007669"/>
    <property type="project" value="TreeGrafter"/>
</dbReference>
<dbReference type="CDD" id="cd19498">
    <property type="entry name" value="RecA-like_HslU"/>
    <property type="match status" value="1"/>
</dbReference>
<dbReference type="FunFam" id="1.10.8.10:FF:000028">
    <property type="entry name" value="ATP-dependent protease ATPase subunit HslU"/>
    <property type="match status" value="1"/>
</dbReference>
<dbReference type="FunFam" id="3.40.50.300:FF:000213">
    <property type="entry name" value="ATP-dependent protease ATPase subunit HslU"/>
    <property type="match status" value="1"/>
</dbReference>
<dbReference type="FunFam" id="3.40.50.300:FF:000220">
    <property type="entry name" value="ATP-dependent protease ATPase subunit HslU"/>
    <property type="match status" value="1"/>
</dbReference>
<dbReference type="Gene3D" id="1.10.8.60">
    <property type="match status" value="1"/>
</dbReference>
<dbReference type="Gene3D" id="1.10.8.10">
    <property type="entry name" value="DNA helicase RuvA subunit, C-terminal domain"/>
    <property type="match status" value="2"/>
</dbReference>
<dbReference type="Gene3D" id="3.40.50.300">
    <property type="entry name" value="P-loop containing nucleotide triphosphate hydrolases"/>
    <property type="match status" value="1"/>
</dbReference>
<dbReference type="HAMAP" id="MF_00249">
    <property type="entry name" value="HslU"/>
    <property type="match status" value="1"/>
</dbReference>
<dbReference type="InterPro" id="IPR003593">
    <property type="entry name" value="AAA+_ATPase"/>
</dbReference>
<dbReference type="InterPro" id="IPR050052">
    <property type="entry name" value="ATP-dep_Clp_protease_ClpX"/>
</dbReference>
<dbReference type="InterPro" id="IPR003959">
    <property type="entry name" value="ATPase_AAA_core"/>
</dbReference>
<dbReference type="InterPro" id="IPR019489">
    <property type="entry name" value="Clp_ATPase_C"/>
</dbReference>
<dbReference type="InterPro" id="IPR004491">
    <property type="entry name" value="HslU"/>
</dbReference>
<dbReference type="InterPro" id="IPR027417">
    <property type="entry name" value="P-loop_NTPase"/>
</dbReference>
<dbReference type="NCBIfam" id="TIGR00390">
    <property type="entry name" value="hslU"/>
    <property type="match status" value="1"/>
</dbReference>
<dbReference type="NCBIfam" id="NF003544">
    <property type="entry name" value="PRK05201.1"/>
    <property type="match status" value="1"/>
</dbReference>
<dbReference type="PANTHER" id="PTHR48102">
    <property type="entry name" value="ATP-DEPENDENT CLP PROTEASE ATP-BINDING SUBUNIT CLPX-LIKE, MITOCHONDRIAL-RELATED"/>
    <property type="match status" value="1"/>
</dbReference>
<dbReference type="PANTHER" id="PTHR48102:SF3">
    <property type="entry name" value="ATP-DEPENDENT PROTEASE ATPASE SUBUNIT HSLU"/>
    <property type="match status" value="1"/>
</dbReference>
<dbReference type="Pfam" id="PF00004">
    <property type="entry name" value="AAA"/>
    <property type="match status" value="1"/>
</dbReference>
<dbReference type="Pfam" id="PF07724">
    <property type="entry name" value="AAA_2"/>
    <property type="match status" value="1"/>
</dbReference>
<dbReference type="SMART" id="SM00382">
    <property type="entry name" value="AAA"/>
    <property type="match status" value="1"/>
</dbReference>
<dbReference type="SMART" id="SM01086">
    <property type="entry name" value="ClpB_D2-small"/>
    <property type="match status" value="1"/>
</dbReference>
<dbReference type="SUPFAM" id="SSF52540">
    <property type="entry name" value="P-loop containing nucleoside triphosphate hydrolases"/>
    <property type="match status" value="1"/>
</dbReference>
<proteinExistence type="inferred from homology"/>
<feature type="chain" id="PRO_0000160488" description="ATP-dependent protease ATPase subunit HslU">
    <location>
        <begin position="1"/>
        <end position="444"/>
    </location>
</feature>
<feature type="binding site" evidence="1">
    <location>
        <position position="18"/>
    </location>
    <ligand>
        <name>ATP</name>
        <dbReference type="ChEBI" id="CHEBI:30616"/>
    </ligand>
</feature>
<feature type="binding site" evidence="1">
    <location>
        <begin position="60"/>
        <end position="65"/>
    </location>
    <ligand>
        <name>ATP</name>
        <dbReference type="ChEBI" id="CHEBI:30616"/>
    </ligand>
</feature>
<feature type="binding site" evidence="1">
    <location>
        <position position="256"/>
    </location>
    <ligand>
        <name>ATP</name>
        <dbReference type="ChEBI" id="CHEBI:30616"/>
    </ligand>
</feature>
<feature type="binding site" evidence="1">
    <location>
        <position position="321"/>
    </location>
    <ligand>
        <name>ATP</name>
        <dbReference type="ChEBI" id="CHEBI:30616"/>
    </ligand>
</feature>
<feature type="binding site" evidence="1">
    <location>
        <position position="393"/>
    </location>
    <ligand>
        <name>ATP</name>
        <dbReference type="ChEBI" id="CHEBI:30616"/>
    </ligand>
</feature>
<organism>
    <name type="scientific">Buchnera aphidicola subsp. Baizongia pistaciae (strain Bp)</name>
    <dbReference type="NCBI Taxonomy" id="224915"/>
    <lineage>
        <taxon>Bacteria</taxon>
        <taxon>Pseudomonadati</taxon>
        <taxon>Pseudomonadota</taxon>
        <taxon>Gammaproteobacteria</taxon>
        <taxon>Enterobacterales</taxon>
        <taxon>Erwiniaceae</taxon>
        <taxon>Buchnera</taxon>
    </lineage>
</organism>
<name>HSLU_BUCBP</name>
<accession>Q89A31</accession>
<comment type="function">
    <text evidence="1">ATPase subunit of a proteasome-like degradation complex; this subunit has chaperone activity. The binding of ATP and its subsequent hydrolysis by HslU are essential for unfolding of protein substrates subsequently hydrolyzed by HslV. HslU recognizes the N-terminal part of its protein substrates and unfolds these before they are guided to HslV for hydrolysis.</text>
</comment>
<comment type="subunit">
    <text evidence="1">A double ring-shaped homohexamer of HslV is capped on each side by a ring-shaped HslU homohexamer. The assembly of the HslU/HslV complex is dependent on binding of ATP.</text>
</comment>
<comment type="subcellular location">
    <subcellularLocation>
        <location evidence="1">Cytoplasm</location>
    </subcellularLocation>
</comment>
<comment type="similarity">
    <text evidence="1">Belongs to the ClpX chaperone family. HslU subfamily.</text>
</comment>
<keyword id="KW-0067">ATP-binding</keyword>
<keyword id="KW-0143">Chaperone</keyword>
<keyword id="KW-0963">Cytoplasm</keyword>
<keyword id="KW-0547">Nucleotide-binding</keyword>
<keyword id="KW-1185">Reference proteome</keyword>
<reference key="1">
    <citation type="journal article" date="2003" name="Proc. Natl. Acad. Sci. U.S.A.">
        <title>Reductive genome evolution in Buchnera aphidicola.</title>
        <authorList>
            <person name="van Ham R.C.H.J."/>
            <person name="Kamerbeek J."/>
            <person name="Palacios C."/>
            <person name="Rausell C."/>
            <person name="Abascal F."/>
            <person name="Bastolla U."/>
            <person name="Fernandez J.M."/>
            <person name="Jimenez L."/>
            <person name="Postigo M."/>
            <person name="Silva F.J."/>
            <person name="Tamames J."/>
            <person name="Viguera E."/>
            <person name="Latorre A."/>
            <person name="Valencia A."/>
            <person name="Moran F."/>
            <person name="Moya A."/>
        </authorList>
    </citation>
    <scope>NUCLEOTIDE SEQUENCE [LARGE SCALE GENOMIC DNA]</scope>
    <source>
        <strain>Bp</strain>
    </source>
</reference>
<protein>
    <recommendedName>
        <fullName evidence="1">ATP-dependent protease ATPase subunit HslU</fullName>
    </recommendedName>
    <alternativeName>
        <fullName evidence="1">Unfoldase HslU</fullName>
    </alternativeName>
</protein>
<gene>
    <name evidence="1" type="primary">hslU</name>
    <name type="ordered locus">bbp_524</name>
</gene>
<evidence type="ECO:0000255" key="1">
    <source>
        <dbReference type="HAMAP-Rule" id="MF_00249"/>
    </source>
</evidence>
<sequence>MSEMTPREIVKELDRFIIGQKKAKRAVAIALRNRWRRMKLNKELRYEITPKNILMIGPTGVGKTEIARRLAKLAKAPFIKVEATKFTEIGYVGKEVDSIIRDLTDSAIKMIKSTAIKKNKKRAKELAEERILDVLVPTIKNNWKKTNTNNNSEATLQIFRKKLREGTLDDKEIEINVAVTPMGIEIMAPPGMEELTNQLQSLFQNLTGNKRNIKKLKIKDAMKLLIEEEAAKLINLEELKKEAIYAVEQHGIVFIDEIDKICRNHGSSGPDISREGVQRDLLPLIEGCTVSTKHGMVKTDHILFIASGAFQVSTPSDLIPELQGRLPIRVELQALTINDFELILTEPKASVTMQYQALLKTEKVKINFTKEGIRHIAEAAWKVNESMENIGARRLHTVLERLMEDISFHASDHRNEITITIDEKYVQKHLDKLISNEDLSRFIL</sequence>